<sequence>MKISQFGSLAFAPIVLLQLFIVQAQLLTDSNAQDLNTALGQKVQYTFLDTGNSNDQLLHLPSTTSSSIITGSLAAANFTGSSSSSSIPKVTSSVITSINYQSSNSTVVTQFTPLPSSSRNETKSSQTTNTISSSTSTGGVGSVKPCLYFVLMLETIAYLFS</sequence>
<proteinExistence type="evidence at transcript level"/>
<gene>
    <name type="ordered locus">YLR042C</name>
</gene>
<comment type="subcellular location">
    <subcellularLocation>
        <location evidence="7">Secreted</location>
        <location evidence="7">Cell wall</location>
    </subcellularLocation>
    <subcellularLocation>
        <location evidence="6">Membrane</location>
        <topology evidence="6">Lipid-anchor</topology>
        <topology evidence="6">GPI-anchor</topology>
    </subcellularLocation>
</comment>
<comment type="induction">
    <text evidence="4 5">Induced in response to cell wall damage.</text>
</comment>
<comment type="PTM">
    <text evidence="1">The GPI-anchor is attached to the protein in the endoplasmic reticulum and serves to target the protein to the cell surface. There, the glucosamine-inositol phospholipid moiety is cleaved off and the GPI-modified mannoprotein is covalently attached via its lipidless GPI glycan remnant to the 1,6-beta-glucan of the outer cell wall layer (By similarity).</text>
</comment>
<dbReference type="EMBL" id="Z73214">
    <property type="protein sequence ID" value="CAA97571.1"/>
    <property type="molecule type" value="Genomic_DNA"/>
</dbReference>
<dbReference type="EMBL" id="AY558531">
    <property type="protein sequence ID" value="AAS56857.1"/>
    <property type="molecule type" value="Genomic_DNA"/>
</dbReference>
<dbReference type="EMBL" id="BK006945">
    <property type="protein sequence ID" value="DAA09360.1"/>
    <property type="molecule type" value="Genomic_DNA"/>
</dbReference>
<dbReference type="PIR" id="S64869">
    <property type="entry name" value="S64869"/>
</dbReference>
<dbReference type="SMR" id="Q07990"/>
<dbReference type="BioGRID" id="31317">
    <property type="interactions" value="27"/>
</dbReference>
<dbReference type="DIP" id="DIP-4831N"/>
<dbReference type="FunCoup" id="Q07990">
    <property type="interactions" value="2"/>
</dbReference>
<dbReference type="STRING" id="4932.YLR042C"/>
<dbReference type="GlyGen" id="Q07990">
    <property type="glycosylation" value="3 sites"/>
</dbReference>
<dbReference type="PaxDb" id="4932-YLR042C"/>
<dbReference type="PeptideAtlas" id="Q07990"/>
<dbReference type="EnsemblFungi" id="YLR042C_mRNA">
    <property type="protein sequence ID" value="YLR042C"/>
    <property type="gene ID" value="YLR042C"/>
</dbReference>
<dbReference type="KEGG" id="sce:YLR042C"/>
<dbReference type="AGR" id="SGD:S000004032"/>
<dbReference type="SGD" id="S000004032">
    <property type="gene designation" value="YLR042C"/>
</dbReference>
<dbReference type="VEuPathDB" id="FungiDB:YLR042C"/>
<dbReference type="HOGENOM" id="CLU_1687688_0_0_1"/>
<dbReference type="InParanoid" id="Q07990"/>
<dbReference type="OMA" id="TGXSSSS"/>
<dbReference type="OrthoDB" id="4065908at2759"/>
<dbReference type="BioCyc" id="YEAST:G3O-32199-MONOMER"/>
<dbReference type="BioGRID-ORCS" id="850731">
    <property type="hits" value="0 hits in 10 CRISPR screens"/>
</dbReference>
<dbReference type="PRO" id="PR:Q07990"/>
<dbReference type="Proteomes" id="UP000002311">
    <property type="component" value="Chromosome XII"/>
</dbReference>
<dbReference type="RNAct" id="Q07990">
    <property type="molecule type" value="protein"/>
</dbReference>
<dbReference type="GO" id="GO:0071944">
    <property type="term" value="C:cell periphery"/>
    <property type="evidence" value="ECO:0007005"/>
    <property type="project" value="SGD"/>
</dbReference>
<dbReference type="GO" id="GO:0005576">
    <property type="term" value="C:extracellular region"/>
    <property type="evidence" value="ECO:0007669"/>
    <property type="project" value="UniProtKB-KW"/>
</dbReference>
<dbReference type="GO" id="GO:0009277">
    <property type="term" value="C:fungal-type cell wall"/>
    <property type="evidence" value="ECO:0000314"/>
    <property type="project" value="SGD"/>
</dbReference>
<dbReference type="GO" id="GO:0000324">
    <property type="term" value="C:fungal-type vacuole"/>
    <property type="evidence" value="ECO:0007005"/>
    <property type="project" value="SGD"/>
</dbReference>
<dbReference type="GO" id="GO:0098552">
    <property type="term" value="C:side of membrane"/>
    <property type="evidence" value="ECO:0007669"/>
    <property type="project" value="UniProtKB-KW"/>
</dbReference>
<dbReference type="GO" id="GO:0060258">
    <property type="term" value="P:negative regulation of filamentous growth"/>
    <property type="evidence" value="ECO:0000315"/>
    <property type="project" value="SGD"/>
</dbReference>
<name>YL042_YEAST</name>
<accession>Q07990</accession>
<accession>D6VY44</accession>
<organism>
    <name type="scientific">Saccharomyces cerevisiae (strain ATCC 204508 / S288c)</name>
    <name type="common">Baker's yeast</name>
    <dbReference type="NCBI Taxonomy" id="559292"/>
    <lineage>
        <taxon>Eukaryota</taxon>
        <taxon>Fungi</taxon>
        <taxon>Dikarya</taxon>
        <taxon>Ascomycota</taxon>
        <taxon>Saccharomycotina</taxon>
        <taxon>Saccharomycetes</taxon>
        <taxon>Saccharomycetales</taxon>
        <taxon>Saccharomycetaceae</taxon>
        <taxon>Saccharomyces</taxon>
    </lineage>
</organism>
<protein>
    <recommendedName>
        <fullName>Cell wall protein YLR042C</fullName>
    </recommendedName>
</protein>
<evidence type="ECO:0000250" key="1"/>
<evidence type="ECO:0000255" key="2"/>
<evidence type="ECO:0000256" key="3">
    <source>
        <dbReference type="SAM" id="MobiDB-lite"/>
    </source>
</evidence>
<evidence type="ECO:0000269" key="4">
    <source>
    </source>
</evidence>
<evidence type="ECO:0000269" key="5">
    <source>
    </source>
</evidence>
<evidence type="ECO:0000305" key="6"/>
<evidence type="ECO:0000305" key="7">
    <source>
    </source>
</evidence>
<keyword id="KW-0134">Cell wall</keyword>
<keyword id="KW-0325">Glycoprotein</keyword>
<keyword id="KW-0336">GPI-anchor</keyword>
<keyword id="KW-0449">Lipoprotein</keyword>
<keyword id="KW-0472">Membrane</keyword>
<keyword id="KW-1185">Reference proteome</keyword>
<keyword id="KW-0964">Secreted</keyword>
<keyword id="KW-0732">Signal</keyword>
<feature type="signal peptide" evidence="2">
    <location>
        <begin position="1"/>
        <end position="24"/>
    </location>
</feature>
<feature type="chain" id="PRO_0000247444" description="Cell wall protein YLR042C">
    <location>
        <begin position="25"/>
        <end position="139"/>
    </location>
</feature>
<feature type="propeptide" id="PRO_0000247445" description="Removed in mature form" evidence="2">
    <location>
        <begin position="140"/>
        <end position="161"/>
    </location>
</feature>
<feature type="region of interest" description="Disordered" evidence="3">
    <location>
        <begin position="111"/>
        <end position="139"/>
    </location>
</feature>
<feature type="compositionally biased region" description="Low complexity" evidence="3">
    <location>
        <begin position="123"/>
        <end position="137"/>
    </location>
</feature>
<feature type="lipid moiety-binding region" description="GPI-anchor amidated glycine" evidence="2">
    <location>
        <position position="139"/>
    </location>
</feature>
<feature type="glycosylation site" description="N-linked (GlcNAc...) asparagine" evidence="2">
    <location>
        <position position="77"/>
    </location>
</feature>
<feature type="glycosylation site" description="N-linked (GlcNAc...) asparagine" evidence="2">
    <location>
        <position position="104"/>
    </location>
</feature>
<feature type="glycosylation site" description="N-linked (GlcNAc...) asparagine" evidence="2">
    <location>
        <position position="120"/>
    </location>
</feature>
<reference key="1">
    <citation type="journal article" date="1997" name="Nature">
        <title>The nucleotide sequence of Saccharomyces cerevisiae chromosome XII.</title>
        <authorList>
            <person name="Johnston M."/>
            <person name="Hillier L.W."/>
            <person name="Riles L."/>
            <person name="Albermann K."/>
            <person name="Andre B."/>
            <person name="Ansorge W."/>
            <person name="Benes V."/>
            <person name="Brueckner M."/>
            <person name="Delius H."/>
            <person name="Dubois E."/>
            <person name="Duesterhoeft A."/>
            <person name="Entian K.-D."/>
            <person name="Floeth M."/>
            <person name="Goffeau A."/>
            <person name="Hebling U."/>
            <person name="Heumann K."/>
            <person name="Heuss-Neitzel D."/>
            <person name="Hilbert H."/>
            <person name="Hilger F."/>
            <person name="Kleine K."/>
            <person name="Koetter P."/>
            <person name="Louis E.J."/>
            <person name="Messenguy F."/>
            <person name="Mewes H.-W."/>
            <person name="Miosga T."/>
            <person name="Moestl D."/>
            <person name="Mueller-Auer S."/>
            <person name="Nentwich U."/>
            <person name="Obermaier B."/>
            <person name="Piravandi E."/>
            <person name="Pohl T.M."/>
            <person name="Portetelle D."/>
            <person name="Purnelle B."/>
            <person name="Rechmann S."/>
            <person name="Rieger M."/>
            <person name="Rinke M."/>
            <person name="Rose M."/>
            <person name="Scharfe M."/>
            <person name="Scherens B."/>
            <person name="Scholler P."/>
            <person name="Schwager C."/>
            <person name="Schwarz S."/>
            <person name="Underwood A.P."/>
            <person name="Urrestarazu L.A."/>
            <person name="Vandenbol M."/>
            <person name="Verhasselt P."/>
            <person name="Vierendeels F."/>
            <person name="Voet M."/>
            <person name="Volckaert G."/>
            <person name="Voss H."/>
            <person name="Wambutt R."/>
            <person name="Wedler E."/>
            <person name="Wedler H."/>
            <person name="Zimmermann F.K."/>
            <person name="Zollner A."/>
            <person name="Hani J."/>
            <person name="Hoheisel J.D."/>
        </authorList>
    </citation>
    <scope>NUCLEOTIDE SEQUENCE [LARGE SCALE GENOMIC DNA]</scope>
    <source>
        <strain>ATCC 204508 / S288c</strain>
    </source>
</reference>
<reference key="2">
    <citation type="journal article" date="2014" name="G3 (Bethesda)">
        <title>The reference genome sequence of Saccharomyces cerevisiae: Then and now.</title>
        <authorList>
            <person name="Engel S.R."/>
            <person name="Dietrich F.S."/>
            <person name="Fisk D.G."/>
            <person name="Binkley G."/>
            <person name="Balakrishnan R."/>
            <person name="Costanzo M.C."/>
            <person name="Dwight S.S."/>
            <person name="Hitz B.C."/>
            <person name="Karra K."/>
            <person name="Nash R.S."/>
            <person name="Weng S."/>
            <person name="Wong E.D."/>
            <person name="Lloyd P."/>
            <person name="Skrzypek M.S."/>
            <person name="Miyasato S.R."/>
            <person name="Simison M."/>
            <person name="Cherry J.M."/>
        </authorList>
    </citation>
    <scope>GENOME REANNOTATION</scope>
    <source>
        <strain>ATCC 204508 / S288c</strain>
    </source>
</reference>
<reference key="3">
    <citation type="journal article" date="2007" name="Genome Res.">
        <title>Approaching a complete repository of sequence-verified protein-encoding clones for Saccharomyces cerevisiae.</title>
        <authorList>
            <person name="Hu Y."/>
            <person name="Rolfs A."/>
            <person name="Bhullar B."/>
            <person name="Murthy T.V.S."/>
            <person name="Zhu C."/>
            <person name="Berger M.F."/>
            <person name="Camargo A.A."/>
            <person name="Kelley F."/>
            <person name="McCarron S."/>
            <person name="Jepson D."/>
            <person name="Richardson A."/>
            <person name="Raphael J."/>
            <person name="Moreira D."/>
            <person name="Taycher E."/>
            <person name="Zuo D."/>
            <person name="Mohr S."/>
            <person name="Kane M.F."/>
            <person name="Williamson J."/>
            <person name="Simpson A.J.G."/>
            <person name="Bulyk M.L."/>
            <person name="Harlow E."/>
            <person name="Marsischky G."/>
            <person name="Kolodner R.D."/>
            <person name="LaBaer J."/>
        </authorList>
    </citation>
    <scope>NUCLEOTIDE SEQUENCE [GENOMIC DNA]</scope>
    <source>
        <strain>ATCC 204508 / S288c</strain>
    </source>
</reference>
<reference key="4">
    <citation type="journal article" date="1999" name="J. Bacteriol.">
        <title>Amino acid residues in the omega-minus region participate in cellular localization of yeast glycosylphosphatidylinositol-attached proteins.</title>
        <authorList>
            <person name="Hamada K."/>
            <person name="Terashima H."/>
            <person name="Arisawa M."/>
            <person name="Yabuki N."/>
            <person name="Kitada K."/>
        </authorList>
    </citation>
    <scope>SUBCELLULAR LOCATION</scope>
</reference>
<reference key="5">
    <citation type="journal article" date="2004" name="J. Biol. Chem.">
        <title>The global transcriptional response to transient cell wall damage in Saccharomyces cerevisiae and its regulation by the cell integrity signaling pathway.</title>
        <authorList>
            <person name="Garcia R."/>
            <person name="Bermejo C."/>
            <person name="Grau C."/>
            <person name="Perez R."/>
            <person name="Rodriguez-Pena J.M."/>
            <person name="Francois J."/>
            <person name="Nombela C."/>
            <person name="Arroyo J."/>
        </authorList>
    </citation>
    <scope>INDUCTION</scope>
</reference>
<reference key="6">
    <citation type="journal article" date="2004" name="Yeast">
        <title>Characterization of the transcriptional response to cell wall stress in Saccharomyces cerevisiae.</title>
        <authorList>
            <person name="Boorsma A."/>
            <person name="de Nobel H."/>
            <person name="ter Riet B."/>
            <person name="Bargmann B."/>
            <person name="Brul S."/>
            <person name="Hellingwerf K.J."/>
            <person name="Klis F.M."/>
        </authorList>
    </citation>
    <scope>INDUCTION</scope>
</reference>